<proteinExistence type="inferred from homology"/>
<name>YBEY_SYNS3</name>
<organism>
    <name type="scientific">Synechococcus sp. (strain CC9311)</name>
    <dbReference type="NCBI Taxonomy" id="64471"/>
    <lineage>
        <taxon>Bacteria</taxon>
        <taxon>Bacillati</taxon>
        <taxon>Cyanobacteriota</taxon>
        <taxon>Cyanophyceae</taxon>
        <taxon>Synechococcales</taxon>
        <taxon>Synechococcaceae</taxon>
        <taxon>Synechococcus</taxon>
    </lineage>
</organism>
<dbReference type="EC" id="3.1.-.-" evidence="1"/>
<dbReference type="EMBL" id="CP000435">
    <property type="protein sequence ID" value="ABI47332.1"/>
    <property type="molecule type" value="Genomic_DNA"/>
</dbReference>
<dbReference type="RefSeq" id="WP_011620553.1">
    <property type="nucleotide sequence ID" value="NC_008319.1"/>
</dbReference>
<dbReference type="SMR" id="Q0I6S3"/>
<dbReference type="STRING" id="64471.sync_2661"/>
<dbReference type="KEGG" id="syg:sync_2661"/>
<dbReference type="eggNOG" id="COG0319">
    <property type="taxonomic scope" value="Bacteria"/>
</dbReference>
<dbReference type="HOGENOM" id="CLU_106710_3_0_3"/>
<dbReference type="OrthoDB" id="9807740at2"/>
<dbReference type="Proteomes" id="UP000001961">
    <property type="component" value="Chromosome"/>
</dbReference>
<dbReference type="GO" id="GO:0005737">
    <property type="term" value="C:cytoplasm"/>
    <property type="evidence" value="ECO:0007669"/>
    <property type="project" value="UniProtKB-SubCell"/>
</dbReference>
<dbReference type="GO" id="GO:0004222">
    <property type="term" value="F:metalloendopeptidase activity"/>
    <property type="evidence" value="ECO:0007669"/>
    <property type="project" value="InterPro"/>
</dbReference>
<dbReference type="GO" id="GO:0004521">
    <property type="term" value="F:RNA endonuclease activity"/>
    <property type="evidence" value="ECO:0007669"/>
    <property type="project" value="UniProtKB-UniRule"/>
</dbReference>
<dbReference type="GO" id="GO:0008270">
    <property type="term" value="F:zinc ion binding"/>
    <property type="evidence" value="ECO:0007669"/>
    <property type="project" value="UniProtKB-UniRule"/>
</dbReference>
<dbReference type="GO" id="GO:0006364">
    <property type="term" value="P:rRNA processing"/>
    <property type="evidence" value="ECO:0007669"/>
    <property type="project" value="UniProtKB-UniRule"/>
</dbReference>
<dbReference type="Gene3D" id="3.40.390.30">
    <property type="entry name" value="Metalloproteases ('zincins'), catalytic domain"/>
    <property type="match status" value="1"/>
</dbReference>
<dbReference type="HAMAP" id="MF_00009">
    <property type="entry name" value="Endoribonucl_YbeY"/>
    <property type="match status" value="1"/>
</dbReference>
<dbReference type="InterPro" id="IPR023091">
    <property type="entry name" value="MetalPrtase_cat_dom_sf_prd"/>
</dbReference>
<dbReference type="InterPro" id="IPR002036">
    <property type="entry name" value="YbeY"/>
</dbReference>
<dbReference type="NCBIfam" id="TIGR00043">
    <property type="entry name" value="rRNA maturation RNase YbeY"/>
    <property type="match status" value="1"/>
</dbReference>
<dbReference type="PANTHER" id="PTHR46986">
    <property type="entry name" value="ENDORIBONUCLEASE YBEY, CHLOROPLASTIC"/>
    <property type="match status" value="1"/>
</dbReference>
<dbReference type="PANTHER" id="PTHR46986:SF1">
    <property type="entry name" value="ENDORIBONUCLEASE YBEY, CHLOROPLASTIC"/>
    <property type="match status" value="1"/>
</dbReference>
<dbReference type="Pfam" id="PF02130">
    <property type="entry name" value="YbeY"/>
    <property type="match status" value="1"/>
</dbReference>
<dbReference type="SUPFAM" id="SSF55486">
    <property type="entry name" value="Metalloproteases ('zincins'), catalytic domain"/>
    <property type="match status" value="1"/>
</dbReference>
<evidence type="ECO:0000255" key="1">
    <source>
        <dbReference type="HAMAP-Rule" id="MF_00009"/>
    </source>
</evidence>
<protein>
    <recommendedName>
        <fullName evidence="1">Endoribonuclease YbeY</fullName>
        <ecNumber evidence="1">3.1.-.-</ecNumber>
    </recommendedName>
</protein>
<accession>Q0I6S3</accession>
<keyword id="KW-0963">Cytoplasm</keyword>
<keyword id="KW-0255">Endonuclease</keyword>
<keyword id="KW-0378">Hydrolase</keyword>
<keyword id="KW-0479">Metal-binding</keyword>
<keyword id="KW-0540">Nuclease</keyword>
<keyword id="KW-1185">Reference proteome</keyword>
<keyword id="KW-0690">Ribosome biogenesis</keyword>
<keyword id="KW-0698">rRNA processing</keyword>
<keyword id="KW-0862">Zinc</keyword>
<feature type="chain" id="PRO_0000284332" description="Endoribonuclease YbeY">
    <location>
        <begin position="1"/>
        <end position="177"/>
    </location>
</feature>
<feature type="binding site" evidence="1">
    <location>
        <position position="142"/>
    </location>
    <ligand>
        <name>Zn(2+)</name>
        <dbReference type="ChEBI" id="CHEBI:29105"/>
        <note>catalytic</note>
    </ligand>
</feature>
<feature type="binding site" evidence="1">
    <location>
        <position position="146"/>
    </location>
    <ligand>
        <name>Zn(2+)</name>
        <dbReference type="ChEBI" id="CHEBI:29105"/>
        <note>catalytic</note>
    </ligand>
</feature>
<feature type="binding site" evidence="1">
    <location>
        <position position="152"/>
    </location>
    <ligand>
        <name>Zn(2+)</name>
        <dbReference type="ChEBI" id="CHEBI:29105"/>
        <note>catalytic</note>
    </ligand>
</feature>
<comment type="function">
    <text evidence="1">Single strand-specific metallo-endoribonuclease involved in late-stage 70S ribosome quality control and in maturation of the 3' terminus of the 16S rRNA.</text>
</comment>
<comment type="cofactor">
    <cofactor evidence="1">
        <name>Zn(2+)</name>
        <dbReference type="ChEBI" id="CHEBI:29105"/>
    </cofactor>
    <text evidence="1">Binds 1 zinc ion.</text>
</comment>
<comment type="subcellular location">
    <subcellularLocation>
        <location evidence="1">Cytoplasm</location>
    </subcellularLocation>
</comment>
<comment type="similarity">
    <text evidence="1">Belongs to the endoribonuclease YbeY family.</text>
</comment>
<sequence>MITIDLAFSPASADLIDAADDEGTRSRLQEAGDWECELSAWIEALRQDHGNHCPEVVRTCDSLSLGISLLDDASIAELNLHWRQKPTPTDVLSFAALESEMPMVAGQELELGDIVVSVPTARRQALEQKHGLERELRWLVSHGLLHLLSWDHPDEDALAAMLQKQEHLLGMGSNVRS</sequence>
<gene>
    <name evidence="1" type="primary">ybeY</name>
    <name type="ordered locus">sync_2661</name>
</gene>
<reference key="1">
    <citation type="journal article" date="2006" name="Proc. Natl. Acad. Sci. U.S.A.">
        <title>Genome sequence of Synechococcus CC9311: insights into adaptation to a coastal environment.</title>
        <authorList>
            <person name="Palenik B."/>
            <person name="Ren Q."/>
            <person name="Dupont C.L."/>
            <person name="Myers G.S."/>
            <person name="Heidelberg J.F."/>
            <person name="Badger J.H."/>
            <person name="Madupu R."/>
            <person name="Nelson W.C."/>
            <person name="Brinkac L.M."/>
            <person name="Dodson R.J."/>
            <person name="Durkin A.S."/>
            <person name="Daugherty S.C."/>
            <person name="Sullivan S.A."/>
            <person name="Khouri H."/>
            <person name="Mohamoud Y."/>
            <person name="Halpin R."/>
            <person name="Paulsen I.T."/>
        </authorList>
    </citation>
    <scope>NUCLEOTIDE SEQUENCE [LARGE SCALE GENOMIC DNA]</scope>
    <source>
        <strain>CC9311</strain>
    </source>
</reference>